<protein>
    <recommendedName>
        <fullName evidence="1">GTPase Era</fullName>
    </recommendedName>
</protein>
<accession>Q8FF17</accession>
<sequence length="301" mass="33796">MSIDKSYCGFIAIVGRPNVGKSTLLNKLLGQKISITSRKAQTTRHRIVGIHTEGAYQAIYVDTPGLHMEEKRAINRLMNKAASSSIGDVELVIFVVEGTRWTPDDEMVLNKLRDGKAPVILAVNKVDNVQEKADLLPHLQFLASQMNFLDIVPISAETGLNVDTIAAIVRKHLPEATHHFPEDYITDRSQRFMASEIIREKLMRFLGAELPYSVTVEIERFVSNERGGYDINGLILVEREGQKKMVIGNKGAKIKTIGIEARKDMQEMFEAPVHLELWVKVKSGWADDERALRSLGYVDDL</sequence>
<feature type="chain" id="PRO_0000180013" description="GTPase Era">
    <location>
        <begin position="1"/>
        <end position="301"/>
    </location>
</feature>
<feature type="domain" description="Era-type G" evidence="2">
    <location>
        <begin position="7"/>
        <end position="175"/>
    </location>
</feature>
<feature type="domain" description="KH type-2" evidence="1">
    <location>
        <begin position="206"/>
        <end position="283"/>
    </location>
</feature>
<feature type="region of interest" description="G1" evidence="2">
    <location>
        <begin position="15"/>
        <end position="22"/>
    </location>
</feature>
<feature type="region of interest" description="G2" evidence="2">
    <location>
        <begin position="41"/>
        <end position="45"/>
    </location>
</feature>
<feature type="region of interest" description="G3" evidence="2">
    <location>
        <begin position="62"/>
        <end position="65"/>
    </location>
</feature>
<feature type="region of interest" description="G4" evidence="2">
    <location>
        <begin position="124"/>
        <end position="127"/>
    </location>
</feature>
<feature type="region of interest" description="G5" evidence="2">
    <location>
        <begin position="154"/>
        <end position="156"/>
    </location>
</feature>
<feature type="binding site" evidence="1">
    <location>
        <begin position="15"/>
        <end position="22"/>
    </location>
    <ligand>
        <name>GTP</name>
        <dbReference type="ChEBI" id="CHEBI:37565"/>
    </ligand>
</feature>
<feature type="binding site" evidence="1">
    <location>
        <begin position="62"/>
        <end position="66"/>
    </location>
    <ligand>
        <name>GTP</name>
        <dbReference type="ChEBI" id="CHEBI:37565"/>
    </ligand>
</feature>
<feature type="binding site" evidence="1">
    <location>
        <begin position="124"/>
        <end position="127"/>
    </location>
    <ligand>
        <name>GTP</name>
        <dbReference type="ChEBI" id="CHEBI:37565"/>
    </ligand>
</feature>
<proteinExistence type="inferred from homology"/>
<reference key="1">
    <citation type="journal article" date="2002" name="Proc. Natl. Acad. Sci. U.S.A.">
        <title>Extensive mosaic structure revealed by the complete genome sequence of uropathogenic Escherichia coli.</title>
        <authorList>
            <person name="Welch R.A."/>
            <person name="Burland V."/>
            <person name="Plunkett G. III"/>
            <person name="Redford P."/>
            <person name="Roesch P."/>
            <person name="Rasko D."/>
            <person name="Buckles E.L."/>
            <person name="Liou S.-R."/>
            <person name="Boutin A."/>
            <person name="Hackett J."/>
            <person name="Stroud D."/>
            <person name="Mayhew G.F."/>
            <person name="Rose D.J."/>
            <person name="Zhou S."/>
            <person name="Schwartz D.C."/>
            <person name="Perna N.T."/>
            <person name="Mobley H.L.T."/>
            <person name="Donnenberg M.S."/>
            <person name="Blattner F.R."/>
        </authorList>
    </citation>
    <scope>NUCLEOTIDE SEQUENCE [LARGE SCALE GENOMIC DNA]</scope>
    <source>
        <strain>CFT073 / ATCC 700928 / UPEC</strain>
    </source>
</reference>
<gene>
    <name evidence="1" type="primary">era</name>
    <name type="ordered locus">c3090</name>
</gene>
<organism>
    <name type="scientific">Escherichia coli O6:H1 (strain CFT073 / ATCC 700928 / UPEC)</name>
    <dbReference type="NCBI Taxonomy" id="199310"/>
    <lineage>
        <taxon>Bacteria</taxon>
        <taxon>Pseudomonadati</taxon>
        <taxon>Pseudomonadota</taxon>
        <taxon>Gammaproteobacteria</taxon>
        <taxon>Enterobacterales</taxon>
        <taxon>Enterobacteriaceae</taxon>
        <taxon>Escherichia</taxon>
    </lineage>
</organism>
<comment type="function">
    <text evidence="1">An essential GTPase that binds both GDP and GTP, with rapid nucleotide exchange. Plays a role in 16S rRNA processing and 30S ribosomal subunit biogenesis and possibly also in cell cycle regulation and energy metabolism.</text>
</comment>
<comment type="subunit">
    <text evidence="1">Monomer.</text>
</comment>
<comment type="subcellular location">
    <subcellularLocation>
        <location>Cytoplasm</location>
    </subcellularLocation>
    <subcellularLocation>
        <location evidence="1">Cell inner membrane</location>
        <topology evidence="1">Peripheral membrane protein</topology>
    </subcellularLocation>
</comment>
<comment type="similarity">
    <text evidence="1 2">Belongs to the TRAFAC class TrmE-Era-EngA-EngB-Septin-like GTPase superfamily. Era GTPase family.</text>
</comment>
<keyword id="KW-0997">Cell inner membrane</keyword>
<keyword id="KW-1003">Cell membrane</keyword>
<keyword id="KW-0963">Cytoplasm</keyword>
<keyword id="KW-0342">GTP-binding</keyword>
<keyword id="KW-0472">Membrane</keyword>
<keyword id="KW-0547">Nucleotide-binding</keyword>
<keyword id="KW-1185">Reference proteome</keyword>
<keyword id="KW-0690">Ribosome biogenesis</keyword>
<keyword id="KW-0694">RNA-binding</keyword>
<keyword id="KW-0699">rRNA-binding</keyword>
<evidence type="ECO:0000255" key="1">
    <source>
        <dbReference type="HAMAP-Rule" id="MF_00367"/>
    </source>
</evidence>
<evidence type="ECO:0000255" key="2">
    <source>
        <dbReference type="PROSITE-ProRule" id="PRU01050"/>
    </source>
</evidence>
<dbReference type="EMBL" id="AE014075">
    <property type="protein sequence ID" value="AAN81539.1"/>
    <property type="molecule type" value="Genomic_DNA"/>
</dbReference>
<dbReference type="RefSeq" id="WP_000020737.1">
    <property type="nucleotide sequence ID" value="NZ_CP051263.1"/>
</dbReference>
<dbReference type="SMR" id="Q8FF17"/>
<dbReference type="STRING" id="199310.c3090"/>
<dbReference type="GeneID" id="93774525"/>
<dbReference type="KEGG" id="ecc:c3090"/>
<dbReference type="eggNOG" id="COG1159">
    <property type="taxonomic scope" value="Bacteria"/>
</dbReference>
<dbReference type="HOGENOM" id="CLU_038009_1_2_6"/>
<dbReference type="BioCyc" id="ECOL199310:C3090-MONOMER"/>
<dbReference type="Proteomes" id="UP000001410">
    <property type="component" value="Chromosome"/>
</dbReference>
<dbReference type="GO" id="GO:0005829">
    <property type="term" value="C:cytosol"/>
    <property type="evidence" value="ECO:0007669"/>
    <property type="project" value="TreeGrafter"/>
</dbReference>
<dbReference type="GO" id="GO:0005886">
    <property type="term" value="C:plasma membrane"/>
    <property type="evidence" value="ECO:0007669"/>
    <property type="project" value="UniProtKB-SubCell"/>
</dbReference>
<dbReference type="GO" id="GO:0005525">
    <property type="term" value="F:GTP binding"/>
    <property type="evidence" value="ECO:0007669"/>
    <property type="project" value="UniProtKB-UniRule"/>
</dbReference>
<dbReference type="GO" id="GO:0003924">
    <property type="term" value="F:GTPase activity"/>
    <property type="evidence" value="ECO:0007669"/>
    <property type="project" value="UniProtKB-UniRule"/>
</dbReference>
<dbReference type="GO" id="GO:0043024">
    <property type="term" value="F:ribosomal small subunit binding"/>
    <property type="evidence" value="ECO:0007669"/>
    <property type="project" value="TreeGrafter"/>
</dbReference>
<dbReference type="GO" id="GO:0070181">
    <property type="term" value="F:small ribosomal subunit rRNA binding"/>
    <property type="evidence" value="ECO:0007669"/>
    <property type="project" value="UniProtKB-UniRule"/>
</dbReference>
<dbReference type="GO" id="GO:0000028">
    <property type="term" value="P:ribosomal small subunit assembly"/>
    <property type="evidence" value="ECO:0007669"/>
    <property type="project" value="TreeGrafter"/>
</dbReference>
<dbReference type="CDD" id="cd04163">
    <property type="entry name" value="Era"/>
    <property type="match status" value="1"/>
</dbReference>
<dbReference type="CDD" id="cd22534">
    <property type="entry name" value="KH-II_Era"/>
    <property type="match status" value="1"/>
</dbReference>
<dbReference type="FunFam" id="3.30.300.20:FF:000003">
    <property type="entry name" value="GTPase Era"/>
    <property type="match status" value="1"/>
</dbReference>
<dbReference type="FunFam" id="3.40.50.300:FF:000094">
    <property type="entry name" value="GTPase Era"/>
    <property type="match status" value="1"/>
</dbReference>
<dbReference type="Gene3D" id="3.30.300.20">
    <property type="match status" value="1"/>
</dbReference>
<dbReference type="Gene3D" id="3.40.50.300">
    <property type="entry name" value="P-loop containing nucleotide triphosphate hydrolases"/>
    <property type="match status" value="1"/>
</dbReference>
<dbReference type="HAMAP" id="MF_00367">
    <property type="entry name" value="GTPase_Era"/>
    <property type="match status" value="1"/>
</dbReference>
<dbReference type="InterPro" id="IPR030388">
    <property type="entry name" value="G_ERA_dom"/>
</dbReference>
<dbReference type="InterPro" id="IPR006073">
    <property type="entry name" value="GTP-bd"/>
</dbReference>
<dbReference type="InterPro" id="IPR005662">
    <property type="entry name" value="GTPase_Era-like"/>
</dbReference>
<dbReference type="InterPro" id="IPR015946">
    <property type="entry name" value="KH_dom-like_a/b"/>
</dbReference>
<dbReference type="InterPro" id="IPR004044">
    <property type="entry name" value="KH_dom_type_2"/>
</dbReference>
<dbReference type="InterPro" id="IPR009019">
    <property type="entry name" value="KH_sf_prok-type"/>
</dbReference>
<dbReference type="InterPro" id="IPR027417">
    <property type="entry name" value="P-loop_NTPase"/>
</dbReference>
<dbReference type="InterPro" id="IPR005225">
    <property type="entry name" value="Small_GTP-bd"/>
</dbReference>
<dbReference type="NCBIfam" id="TIGR00436">
    <property type="entry name" value="era"/>
    <property type="match status" value="1"/>
</dbReference>
<dbReference type="NCBIfam" id="NF000908">
    <property type="entry name" value="PRK00089.1"/>
    <property type="match status" value="1"/>
</dbReference>
<dbReference type="NCBIfam" id="TIGR00231">
    <property type="entry name" value="small_GTP"/>
    <property type="match status" value="1"/>
</dbReference>
<dbReference type="PANTHER" id="PTHR42698">
    <property type="entry name" value="GTPASE ERA"/>
    <property type="match status" value="1"/>
</dbReference>
<dbReference type="PANTHER" id="PTHR42698:SF1">
    <property type="entry name" value="GTPASE ERA, MITOCHONDRIAL"/>
    <property type="match status" value="1"/>
</dbReference>
<dbReference type="Pfam" id="PF07650">
    <property type="entry name" value="KH_2"/>
    <property type="match status" value="1"/>
</dbReference>
<dbReference type="Pfam" id="PF01926">
    <property type="entry name" value="MMR_HSR1"/>
    <property type="match status" value="1"/>
</dbReference>
<dbReference type="SUPFAM" id="SSF52540">
    <property type="entry name" value="P-loop containing nucleoside triphosphate hydrolases"/>
    <property type="match status" value="1"/>
</dbReference>
<dbReference type="SUPFAM" id="SSF54814">
    <property type="entry name" value="Prokaryotic type KH domain (KH-domain type II)"/>
    <property type="match status" value="1"/>
</dbReference>
<dbReference type="PROSITE" id="PS51713">
    <property type="entry name" value="G_ERA"/>
    <property type="match status" value="1"/>
</dbReference>
<dbReference type="PROSITE" id="PS50823">
    <property type="entry name" value="KH_TYPE_2"/>
    <property type="match status" value="1"/>
</dbReference>
<name>ERA_ECOL6</name>